<organism>
    <name type="scientific">Sus scrofa</name>
    <name type="common">Pig</name>
    <dbReference type="NCBI Taxonomy" id="9823"/>
    <lineage>
        <taxon>Eukaryota</taxon>
        <taxon>Metazoa</taxon>
        <taxon>Chordata</taxon>
        <taxon>Craniata</taxon>
        <taxon>Vertebrata</taxon>
        <taxon>Euteleostomi</taxon>
        <taxon>Mammalia</taxon>
        <taxon>Eutheria</taxon>
        <taxon>Laurasiatheria</taxon>
        <taxon>Artiodactyla</taxon>
        <taxon>Suina</taxon>
        <taxon>Suidae</taxon>
        <taxon>Sus</taxon>
    </lineage>
</organism>
<accession>P81045</accession>
<evidence type="ECO:0000250" key="1">
    <source>
        <dbReference type="UniProtKB" id="P56394"/>
    </source>
</evidence>
<evidence type="ECO:0000250" key="2">
    <source>
        <dbReference type="UniProtKB" id="Q14061"/>
    </source>
</evidence>
<evidence type="ECO:0000255" key="3">
    <source>
        <dbReference type="PROSITE-ProRule" id="PRU01150"/>
    </source>
</evidence>
<evidence type="ECO:0000269" key="4">
    <source>
    </source>
</evidence>
<evidence type="ECO:0000305" key="5"/>
<protein>
    <recommendedName>
        <fullName>Cytochrome c oxidase copper chaperone</fullName>
    </recommendedName>
    <alternativeName>
        <fullName>Dopuin</fullName>
    </alternativeName>
</protein>
<name>COX17_PIG</name>
<proteinExistence type="evidence at protein level"/>
<keyword id="KW-0007">Acetylation</keyword>
<keyword id="KW-0143">Chaperone</keyword>
<keyword id="KW-0186">Copper</keyword>
<keyword id="KW-0963">Cytoplasm</keyword>
<keyword id="KW-0903">Direct protein sequencing</keyword>
<keyword id="KW-1015">Disulfide bond</keyword>
<keyword id="KW-0479">Metal-binding</keyword>
<keyword id="KW-0496">Mitochondrion</keyword>
<keyword id="KW-0597">Phosphoprotein</keyword>
<keyword id="KW-1185">Reference proteome</keyword>
<feature type="chain" id="PRO_0000213540" description="Cytochrome c oxidase copper chaperone">
    <location>
        <begin position="1"/>
        <end position="62"/>
    </location>
</feature>
<feature type="domain" description="CHCH" evidence="3">
    <location>
        <begin position="22"/>
        <end position="62"/>
    </location>
</feature>
<feature type="short sequence motif" description="Cx9C motif 1" evidence="3">
    <location>
        <begin position="25"/>
        <end position="35"/>
    </location>
</feature>
<feature type="short sequence motif" description="Cx9C motif 2" evidence="3">
    <location>
        <begin position="44"/>
        <end position="54"/>
    </location>
</feature>
<feature type="binding site" evidence="2">
    <location>
        <position position="22"/>
    </location>
    <ligand>
        <name>Cu cation</name>
        <dbReference type="ChEBI" id="CHEBI:23378"/>
    </ligand>
</feature>
<feature type="binding site" evidence="2">
    <location>
        <position position="23"/>
    </location>
    <ligand>
        <name>Cu cation</name>
        <dbReference type="ChEBI" id="CHEBI:23378"/>
    </ligand>
</feature>
<feature type="modified residue" description="Phosphoserine" evidence="2">
    <location>
        <position position="13"/>
    </location>
</feature>
<feature type="modified residue" description="N6-acetyllysine" evidence="1">
    <location>
        <position position="17"/>
    </location>
</feature>
<feature type="modified residue" description="N6-acetyllysine" evidence="1">
    <location>
        <position position="29"/>
    </location>
</feature>
<feature type="disulfide bond" evidence="3">
    <location>
        <begin position="25"/>
        <end position="54"/>
    </location>
</feature>
<feature type="disulfide bond" evidence="3">
    <location>
        <begin position="35"/>
        <end position="44"/>
    </location>
</feature>
<sequence>PGLAAAIPAPPESQEKKPLKPCCACPETKKARDACIIEKGEEHCGHLIEAHKECMRALGFKI</sequence>
<reference key="1">
    <citation type="journal article" date="1997" name="Eur. J. Biochem.">
        <title>Characterization of dopuin, a polypeptide with special residue distributions.</title>
        <authorList>
            <person name="Chen Z.-W."/>
            <person name="Bergman T."/>
            <person name="Ostenson C.-G."/>
            <person name="Efendic S."/>
            <person name="Mutt V."/>
            <person name="Joernvall H."/>
        </authorList>
    </citation>
    <scope>PROTEIN SEQUENCE</scope>
    <source>
        <tissue>Small intestine</tissue>
    </source>
</reference>
<reference key="2">
    <citation type="journal article" date="2007" name="Proc. Natl. Acad. Sci. U.S.A.">
        <title>Human Sco1 functional studies and pathological implications of the P174L mutant.</title>
        <authorList>
            <person name="Banci L."/>
            <person name="Bertini I."/>
            <person name="Ciofi-Baffoni S."/>
            <person name="Leontari I."/>
            <person name="Martinelli M."/>
            <person name="Palumaa P."/>
            <person name="Sillard R."/>
            <person name="Wang S."/>
        </authorList>
    </citation>
    <scope>FUNCTION</scope>
</reference>
<gene>
    <name type="primary">COX17</name>
</gene>
<dbReference type="SMR" id="P81045"/>
<dbReference type="FunCoup" id="P81045">
    <property type="interactions" value="736"/>
</dbReference>
<dbReference type="STRING" id="9823.ENSSSCP00000047675"/>
<dbReference type="PaxDb" id="9823-ENSSSCP00000012672"/>
<dbReference type="PeptideAtlas" id="P81045"/>
<dbReference type="eggNOG" id="KOG3496">
    <property type="taxonomic scope" value="Eukaryota"/>
</dbReference>
<dbReference type="HOGENOM" id="CLU_149618_1_3_1"/>
<dbReference type="InParanoid" id="P81045"/>
<dbReference type="OMA" id="QEACTKW"/>
<dbReference type="Proteomes" id="UP000008227">
    <property type="component" value="Unplaced"/>
</dbReference>
<dbReference type="Proteomes" id="UP000314985">
    <property type="component" value="Unplaced"/>
</dbReference>
<dbReference type="Proteomes" id="UP000694570">
    <property type="component" value="Unplaced"/>
</dbReference>
<dbReference type="Proteomes" id="UP000694571">
    <property type="component" value="Unplaced"/>
</dbReference>
<dbReference type="Proteomes" id="UP000694720">
    <property type="component" value="Unplaced"/>
</dbReference>
<dbReference type="Proteomes" id="UP000694722">
    <property type="component" value="Unplaced"/>
</dbReference>
<dbReference type="Proteomes" id="UP000694723">
    <property type="component" value="Unplaced"/>
</dbReference>
<dbReference type="Proteomes" id="UP000694724">
    <property type="component" value="Unplaced"/>
</dbReference>
<dbReference type="Proteomes" id="UP000694725">
    <property type="component" value="Unplaced"/>
</dbReference>
<dbReference type="Proteomes" id="UP000694726">
    <property type="component" value="Unplaced"/>
</dbReference>
<dbReference type="Proteomes" id="UP000694727">
    <property type="component" value="Unplaced"/>
</dbReference>
<dbReference type="Proteomes" id="UP000694728">
    <property type="component" value="Unplaced"/>
</dbReference>
<dbReference type="GO" id="GO:0005758">
    <property type="term" value="C:mitochondrial intermembrane space"/>
    <property type="evidence" value="ECO:0000318"/>
    <property type="project" value="GO_Central"/>
</dbReference>
<dbReference type="GO" id="GO:0016531">
    <property type="term" value="F:copper chaperone activity"/>
    <property type="evidence" value="ECO:0000314"/>
    <property type="project" value="UniProtKB"/>
</dbReference>
<dbReference type="GO" id="GO:0005507">
    <property type="term" value="F:copper ion binding"/>
    <property type="evidence" value="ECO:0007669"/>
    <property type="project" value="InterPro"/>
</dbReference>
<dbReference type="GO" id="GO:0033617">
    <property type="term" value="P:mitochondrial cytochrome c oxidase assembly"/>
    <property type="evidence" value="ECO:0000318"/>
    <property type="project" value="GO_Central"/>
</dbReference>
<dbReference type="FunFam" id="1.10.287.1130:FF:000001">
    <property type="entry name" value="cytochrome c oxidase copper chaperone"/>
    <property type="match status" value="1"/>
</dbReference>
<dbReference type="Gene3D" id="1.10.287.1130">
    <property type="entry name" value="CytochromE C oxidase copper chaperone"/>
    <property type="match status" value="1"/>
</dbReference>
<dbReference type="InterPro" id="IPR009069">
    <property type="entry name" value="Cys_alpha_HP_mot_SF"/>
</dbReference>
<dbReference type="InterPro" id="IPR007745">
    <property type="entry name" value="Cyt_c_oxidase_Cu-chaperone"/>
</dbReference>
<dbReference type="PANTHER" id="PTHR16719">
    <property type="entry name" value="CYTOCHROME C OXIDASE COPPER CHAPERONE"/>
    <property type="match status" value="1"/>
</dbReference>
<dbReference type="PANTHER" id="PTHR16719:SF0">
    <property type="entry name" value="CYTOCHROME C OXIDASE COPPER CHAPERONE"/>
    <property type="match status" value="1"/>
</dbReference>
<dbReference type="Pfam" id="PF05051">
    <property type="entry name" value="COX17"/>
    <property type="match status" value="1"/>
</dbReference>
<dbReference type="SUPFAM" id="SSF47072">
    <property type="entry name" value="Cysteine alpha-hairpin motif"/>
    <property type="match status" value="1"/>
</dbReference>
<dbReference type="PROSITE" id="PS51808">
    <property type="entry name" value="CHCH"/>
    <property type="match status" value="1"/>
</dbReference>
<comment type="function">
    <text evidence="4">Copper metallochaperone essential for the assembly of the mitochondrial respiratory chain complex IV (CIV), also known as cytochrome c oxidase. Binds two copper ions and delivers them to the metallochaperone SCO1 which transports the copper ions to the Cu(A) site on the cytochrome c oxidase subunit II (MT-CO2/COX2).</text>
</comment>
<comment type="subunit">
    <text evidence="2">Interacts with COA1. Interacts with the chaperone CHCHD4; this is important for correct folding and the formation of disulfide bonds that stabilize the structure.</text>
</comment>
<comment type="subcellular location">
    <subcellularLocation>
        <location evidence="2">Mitochondrion intermembrane space</location>
    </subcellularLocation>
    <subcellularLocation>
        <location evidence="2">Cytoplasm</location>
    </subcellularLocation>
</comment>
<comment type="PTM">
    <text evidence="1">Acetylation by KAT8 promotes assembly of the mitochondrial respiratory chain complex IV (CIV).</text>
</comment>
<comment type="similarity">
    <text evidence="5">Belongs to the COX17 family.</text>
</comment>